<sequence>MDIFSIANQHIRFAVKLATAIVLALFVGFHFQLETPRWAVLTAAIVAAGPAFAAGGEPYSGAIRYRGFLRIIGTFIGCIAGLVIIIAMIRAPLLMILVCCIWAGFCTWISSLVRIENSYAWGLAGYTALIIVITIQPEPLLTPQFAVERCSEIVIGIVCAIMADLLFSPRSIKQEVDRELESLLVAQYQLMQLCIKHGDGEVVDKAWGDLVRRTTALQGMRSNLNMESSRWARANRRLKAINTLSLTLITQSCETYLIQNTRPELITDTFREFFDTPVETAQDVHKQLKRLRRVIAWTGERETPVTIYSWVAAATRYQLLKRGVISNTKINATEEEILQGEPEVKVESAERHHAMVNFWRTTLSCILGTLFWLWTGWTSGSGAMVMIAVVTSLAMRLPNPRMVAIDFIYGTLAALPLGLLYFLVIIPNTQQSMLLLCISLAVLGFFLGIEVQKRRLGSMGALASTINIIVLDNPMTFHFSQFLDSALGQIVGCVLAFTVILLVRDKSRDRTGRVLLNQFVSAAVSAMTTNVARRKENHLPALYQQLFLLMNKFPGDLPKFRLALTMIIAHQRLRDAPIPVNEDLSAFHRQMRRTADHVISARSDDKRRRYFGQLLEELEIYQEKLCIWQAPPQVTEPVHRLAGMLHKYQHALTDS</sequence>
<organism>
    <name type="scientific">Escherichia coli O157:H7 (strain EC4115 / EHEC)</name>
    <dbReference type="NCBI Taxonomy" id="444450"/>
    <lineage>
        <taxon>Bacteria</taxon>
        <taxon>Pseudomonadati</taxon>
        <taxon>Pseudomonadota</taxon>
        <taxon>Gammaproteobacteria</taxon>
        <taxon>Enterobacterales</taxon>
        <taxon>Enterobacteriaceae</taxon>
        <taxon>Escherichia</taxon>
    </lineage>
</organism>
<comment type="function">
    <text evidence="1">Forms an efflux pump with AaeA. Could function as a metabolic relief valve, allowing to eliminate certain compounds when they accumulate to high levels in the cell.</text>
</comment>
<comment type="subcellular location">
    <subcellularLocation>
        <location evidence="1">Cell inner membrane</location>
        <topology evidence="1">Multi-pass membrane protein</topology>
    </subcellularLocation>
</comment>
<comment type="induction">
    <text evidence="1">Positively coregulated with aaeA and aaeX by AaeR.</text>
</comment>
<comment type="similarity">
    <text evidence="1">Belongs to the aromatic acid exporter ArAE (TC 2.A.85) family.</text>
</comment>
<name>AAEB_ECO5E</name>
<keyword id="KW-0997">Cell inner membrane</keyword>
<keyword id="KW-1003">Cell membrane</keyword>
<keyword id="KW-0472">Membrane</keyword>
<keyword id="KW-0812">Transmembrane</keyword>
<keyword id="KW-1133">Transmembrane helix</keyword>
<keyword id="KW-0813">Transport</keyword>
<proteinExistence type="inferred from homology"/>
<evidence type="ECO:0000255" key="1">
    <source>
        <dbReference type="HAMAP-Rule" id="MF_01545"/>
    </source>
</evidence>
<feature type="chain" id="PRO_1000146733" description="p-hydroxybenzoic acid efflux pump subunit AaeB">
    <location>
        <begin position="1"/>
        <end position="655"/>
    </location>
</feature>
<feature type="transmembrane region" description="Helical" evidence="1">
    <location>
        <begin position="13"/>
        <end position="33"/>
    </location>
</feature>
<feature type="transmembrane region" description="Helical" evidence="1">
    <location>
        <begin position="38"/>
        <end position="58"/>
    </location>
</feature>
<feature type="transmembrane region" description="Helical" evidence="1">
    <location>
        <begin position="69"/>
        <end position="89"/>
    </location>
</feature>
<feature type="transmembrane region" description="Helical" evidence="1">
    <location>
        <begin position="93"/>
        <end position="113"/>
    </location>
</feature>
<feature type="transmembrane region" description="Helical" evidence="1">
    <location>
        <begin position="121"/>
        <end position="141"/>
    </location>
</feature>
<feature type="transmembrane region" description="Helical" evidence="1">
    <location>
        <begin position="152"/>
        <end position="172"/>
    </location>
</feature>
<feature type="transmembrane region" description="Helical" evidence="1">
    <location>
        <begin position="370"/>
        <end position="390"/>
    </location>
</feature>
<feature type="transmembrane region" description="Helical" evidence="1">
    <location>
        <begin position="407"/>
        <end position="427"/>
    </location>
</feature>
<feature type="transmembrane region" description="Helical" evidence="1">
    <location>
        <begin position="431"/>
        <end position="451"/>
    </location>
</feature>
<feature type="transmembrane region" description="Helical" evidence="1">
    <location>
        <begin position="459"/>
        <end position="479"/>
    </location>
</feature>
<feature type="transmembrane region" description="Helical" evidence="1">
    <location>
        <begin position="482"/>
        <end position="502"/>
    </location>
</feature>
<dbReference type="EMBL" id="CP001164">
    <property type="protein sequence ID" value="ACI39169.1"/>
    <property type="molecule type" value="Genomic_DNA"/>
</dbReference>
<dbReference type="RefSeq" id="WP_000350958.1">
    <property type="nucleotide sequence ID" value="NC_011353.1"/>
</dbReference>
<dbReference type="SMR" id="B5YSW6"/>
<dbReference type="KEGG" id="ecf:ECH74115_4557"/>
<dbReference type="HOGENOM" id="CLU_027647_0_0_6"/>
<dbReference type="GO" id="GO:0005886">
    <property type="term" value="C:plasma membrane"/>
    <property type="evidence" value="ECO:0007669"/>
    <property type="project" value="UniProtKB-SubCell"/>
</dbReference>
<dbReference type="GO" id="GO:0022857">
    <property type="term" value="F:transmembrane transporter activity"/>
    <property type="evidence" value="ECO:0007669"/>
    <property type="project" value="UniProtKB-UniRule"/>
</dbReference>
<dbReference type="GO" id="GO:0046942">
    <property type="term" value="P:carboxylic acid transport"/>
    <property type="evidence" value="ECO:0007669"/>
    <property type="project" value="InterPro"/>
</dbReference>
<dbReference type="HAMAP" id="MF_01545">
    <property type="entry name" value="AaeB"/>
    <property type="match status" value="1"/>
</dbReference>
<dbReference type="InterPro" id="IPR006726">
    <property type="entry name" value="PHBA_efflux_AaeB/fusaric-R"/>
</dbReference>
<dbReference type="InterPro" id="IPR023706">
    <property type="entry name" value="PHBA_efflux_pump_AaeB"/>
</dbReference>
<dbReference type="NCBIfam" id="NF007916">
    <property type="entry name" value="PRK10631.1"/>
    <property type="match status" value="1"/>
</dbReference>
<dbReference type="PANTHER" id="PTHR30509:SF9">
    <property type="entry name" value="MULTIDRUG RESISTANCE PROTEIN MDTO"/>
    <property type="match status" value="1"/>
</dbReference>
<dbReference type="PANTHER" id="PTHR30509">
    <property type="entry name" value="P-HYDROXYBENZOIC ACID EFFLUX PUMP SUBUNIT-RELATED"/>
    <property type="match status" value="1"/>
</dbReference>
<dbReference type="Pfam" id="PF04632">
    <property type="entry name" value="FUSC"/>
    <property type="match status" value="1"/>
</dbReference>
<accession>B5YSW6</accession>
<gene>
    <name evidence="1" type="primary">aaeB</name>
    <name type="ordered locus">ECH74115_4557</name>
</gene>
<reference key="1">
    <citation type="journal article" date="2011" name="Proc. Natl. Acad. Sci. U.S.A.">
        <title>Genomic anatomy of Escherichia coli O157:H7 outbreaks.</title>
        <authorList>
            <person name="Eppinger M."/>
            <person name="Mammel M.K."/>
            <person name="Leclerc J.E."/>
            <person name="Ravel J."/>
            <person name="Cebula T.A."/>
        </authorList>
    </citation>
    <scope>NUCLEOTIDE SEQUENCE [LARGE SCALE GENOMIC DNA]</scope>
    <source>
        <strain>EC4115 / EHEC</strain>
    </source>
</reference>
<protein>
    <recommendedName>
        <fullName evidence="1">p-hydroxybenzoic acid efflux pump subunit AaeB</fullName>
        <shortName evidence="1">pHBA efflux pump protein B</shortName>
    </recommendedName>
</protein>